<gene>
    <name evidence="1" type="primary">upp</name>
    <name type="ordered locus">BPUM_3334</name>
</gene>
<organism>
    <name type="scientific">Bacillus pumilus (strain SAFR-032)</name>
    <dbReference type="NCBI Taxonomy" id="315750"/>
    <lineage>
        <taxon>Bacteria</taxon>
        <taxon>Bacillati</taxon>
        <taxon>Bacillota</taxon>
        <taxon>Bacilli</taxon>
        <taxon>Bacillales</taxon>
        <taxon>Bacillaceae</taxon>
        <taxon>Bacillus</taxon>
    </lineage>
</organism>
<protein>
    <recommendedName>
        <fullName evidence="1">Uracil phosphoribosyltransferase</fullName>
        <ecNumber evidence="1">2.4.2.9</ecNumber>
    </recommendedName>
    <alternativeName>
        <fullName evidence="1">UMP pyrophosphorylase</fullName>
    </alternativeName>
    <alternativeName>
        <fullName evidence="1">UPRTase</fullName>
    </alternativeName>
</protein>
<proteinExistence type="inferred from homology"/>
<sequence>MAKVYVFDHPLIQHKLTYIRDVHTGTKEFRELVDEVATLMAFEITRDLPLEEVDVETPVQVAKSNVISGKKLGVVPILRAGLGMVDGILKLIPAAKVGHVGLYRDPKTLKPVEYYVKLPSDVEEREFIVVDPMLATGGSAVEALNSLKKRGAKNIRFMCLIAAPEGVEEMQKHHPDVDIYIAALDEKLNEKGYIIPGLGDAGDRMYGTK</sequence>
<keyword id="KW-0021">Allosteric enzyme</keyword>
<keyword id="KW-0328">Glycosyltransferase</keyword>
<keyword id="KW-0342">GTP-binding</keyword>
<keyword id="KW-0460">Magnesium</keyword>
<keyword id="KW-0547">Nucleotide-binding</keyword>
<keyword id="KW-0808">Transferase</keyword>
<accession>A8FIC0</accession>
<comment type="function">
    <text evidence="1">Catalyzes the conversion of uracil and 5-phospho-alpha-D-ribose 1-diphosphate (PRPP) to UMP and diphosphate.</text>
</comment>
<comment type="catalytic activity">
    <reaction evidence="1">
        <text>UMP + diphosphate = 5-phospho-alpha-D-ribose 1-diphosphate + uracil</text>
        <dbReference type="Rhea" id="RHEA:13017"/>
        <dbReference type="ChEBI" id="CHEBI:17568"/>
        <dbReference type="ChEBI" id="CHEBI:33019"/>
        <dbReference type="ChEBI" id="CHEBI:57865"/>
        <dbReference type="ChEBI" id="CHEBI:58017"/>
        <dbReference type="EC" id="2.4.2.9"/>
    </reaction>
</comment>
<comment type="cofactor">
    <cofactor evidence="1">
        <name>Mg(2+)</name>
        <dbReference type="ChEBI" id="CHEBI:18420"/>
    </cofactor>
    <text evidence="1">Binds 1 Mg(2+) ion per subunit. The magnesium is bound as Mg-PRPP.</text>
</comment>
<comment type="activity regulation">
    <text evidence="1">Allosterically activated by GTP.</text>
</comment>
<comment type="pathway">
    <text evidence="1">Pyrimidine metabolism; UMP biosynthesis via salvage pathway; UMP from uracil: step 1/1.</text>
</comment>
<comment type="similarity">
    <text evidence="1">Belongs to the UPRTase family.</text>
</comment>
<evidence type="ECO:0000255" key="1">
    <source>
        <dbReference type="HAMAP-Rule" id="MF_01218"/>
    </source>
</evidence>
<name>UPP_BACP2</name>
<feature type="chain" id="PRO_1000066727" description="Uracil phosphoribosyltransferase">
    <location>
        <begin position="1"/>
        <end position="209"/>
    </location>
</feature>
<feature type="binding site" evidence="1">
    <location>
        <position position="79"/>
    </location>
    <ligand>
        <name>5-phospho-alpha-D-ribose 1-diphosphate</name>
        <dbReference type="ChEBI" id="CHEBI:58017"/>
    </ligand>
</feature>
<feature type="binding site" evidence="1">
    <location>
        <position position="104"/>
    </location>
    <ligand>
        <name>5-phospho-alpha-D-ribose 1-diphosphate</name>
        <dbReference type="ChEBI" id="CHEBI:58017"/>
    </ligand>
</feature>
<feature type="binding site" evidence="1">
    <location>
        <begin position="131"/>
        <end position="139"/>
    </location>
    <ligand>
        <name>5-phospho-alpha-D-ribose 1-diphosphate</name>
        <dbReference type="ChEBI" id="CHEBI:58017"/>
    </ligand>
</feature>
<feature type="binding site" evidence="1">
    <location>
        <position position="194"/>
    </location>
    <ligand>
        <name>uracil</name>
        <dbReference type="ChEBI" id="CHEBI:17568"/>
    </ligand>
</feature>
<feature type="binding site" evidence="1">
    <location>
        <begin position="199"/>
        <end position="201"/>
    </location>
    <ligand>
        <name>uracil</name>
        <dbReference type="ChEBI" id="CHEBI:17568"/>
    </ligand>
</feature>
<feature type="binding site" evidence="1">
    <location>
        <position position="200"/>
    </location>
    <ligand>
        <name>5-phospho-alpha-D-ribose 1-diphosphate</name>
        <dbReference type="ChEBI" id="CHEBI:58017"/>
    </ligand>
</feature>
<reference key="1">
    <citation type="journal article" date="2007" name="PLoS ONE">
        <title>Paradoxical DNA repair and peroxide resistance gene conservation in Bacillus pumilus SAFR-032.</title>
        <authorList>
            <person name="Gioia J."/>
            <person name="Yerrapragada S."/>
            <person name="Qin X."/>
            <person name="Jiang H."/>
            <person name="Igboeli O.C."/>
            <person name="Muzny D."/>
            <person name="Dugan-Rocha S."/>
            <person name="Ding Y."/>
            <person name="Hawes A."/>
            <person name="Liu W."/>
            <person name="Perez L."/>
            <person name="Kovar C."/>
            <person name="Dinh H."/>
            <person name="Lee S."/>
            <person name="Nazareth L."/>
            <person name="Blyth P."/>
            <person name="Holder M."/>
            <person name="Buhay C."/>
            <person name="Tirumalai M.R."/>
            <person name="Liu Y."/>
            <person name="Dasgupta I."/>
            <person name="Bokhetache L."/>
            <person name="Fujita M."/>
            <person name="Karouia F."/>
            <person name="Eswara Moorthy P."/>
            <person name="Siefert J."/>
            <person name="Uzman A."/>
            <person name="Buzumbo P."/>
            <person name="Verma A."/>
            <person name="Zwiya H."/>
            <person name="McWilliams B.D."/>
            <person name="Olowu A."/>
            <person name="Clinkenbeard K.D."/>
            <person name="Newcombe D."/>
            <person name="Golebiewski L."/>
            <person name="Petrosino J.F."/>
            <person name="Nicholson W.L."/>
            <person name="Fox G.E."/>
            <person name="Venkateswaran K."/>
            <person name="Highlander S.K."/>
            <person name="Weinstock G.M."/>
        </authorList>
    </citation>
    <scope>NUCLEOTIDE SEQUENCE [LARGE SCALE GENOMIC DNA]</scope>
    <source>
        <strain>SAFR-032</strain>
    </source>
</reference>
<dbReference type="EC" id="2.4.2.9" evidence="1"/>
<dbReference type="EMBL" id="CP000813">
    <property type="protein sequence ID" value="ABV63987.1"/>
    <property type="molecule type" value="Genomic_DNA"/>
</dbReference>
<dbReference type="RefSeq" id="WP_003214553.1">
    <property type="nucleotide sequence ID" value="NZ_VEIS01000002.1"/>
</dbReference>
<dbReference type="SMR" id="A8FIC0"/>
<dbReference type="STRING" id="315750.BPUM_3334"/>
<dbReference type="GeneID" id="66361200"/>
<dbReference type="KEGG" id="bpu:BPUM_3334"/>
<dbReference type="eggNOG" id="COG0035">
    <property type="taxonomic scope" value="Bacteria"/>
</dbReference>
<dbReference type="HOGENOM" id="CLU_067096_2_2_9"/>
<dbReference type="OrthoDB" id="9781675at2"/>
<dbReference type="UniPathway" id="UPA00574">
    <property type="reaction ID" value="UER00636"/>
</dbReference>
<dbReference type="Proteomes" id="UP000001355">
    <property type="component" value="Chromosome"/>
</dbReference>
<dbReference type="GO" id="GO:0005525">
    <property type="term" value="F:GTP binding"/>
    <property type="evidence" value="ECO:0007669"/>
    <property type="project" value="UniProtKB-KW"/>
</dbReference>
<dbReference type="GO" id="GO:0000287">
    <property type="term" value="F:magnesium ion binding"/>
    <property type="evidence" value="ECO:0007669"/>
    <property type="project" value="UniProtKB-UniRule"/>
</dbReference>
<dbReference type="GO" id="GO:0004845">
    <property type="term" value="F:uracil phosphoribosyltransferase activity"/>
    <property type="evidence" value="ECO:0007669"/>
    <property type="project" value="UniProtKB-UniRule"/>
</dbReference>
<dbReference type="GO" id="GO:0044206">
    <property type="term" value="P:UMP salvage"/>
    <property type="evidence" value="ECO:0007669"/>
    <property type="project" value="UniProtKB-UniRule"/>
</dbReference>
<dbReference type="GO" id="GO:0006223">
    <property type="term" value="P:uracil salvage"/>
    <property type="evidence" value="ECO:0007669"/>
    <property type="project" value="InterPro"/>
</dbReference>
<dbReference type="CDD" id="cd06223">
    <property type="entry name" value="PRTases_typeI"/>
    <property type="match status" value="1"/>
</dbReference>
<dbReference type="FunFam" id="3.40.50.2020:FF:000003">
    <property type="entry name" value="Uracil phosphoribosyltransferase"/>
    <property type="match status" value="1"/>
</dbReference>
<dbReference type="Gene3D" id="3.40.50.2020">
    <property type="match status" value="1"/>
</dbReference>
<dbReference type="HAMAP" id="MF_01218_B">
    <property type="entry name" value="Upp_B"/>
    <property type="match status" value="1"/>
</dbReference>
<dbReference type="InterPro" id="IPR000836">
    <property type="entry name" value="PRibTrfase_dom"/>
</dbReference>
<dbReference type="InterPro" id="IPR029057">
    <property type="entry name" value="PRTase-like"/>
</dbReference>
<dbReference type="InterPro" id="IPR034332">
    <property type="entry name" value="Upp_B"/>
</dbReference>
<dbReference type="InterPro" id="IPR050054">
    <property type="entry name" value="UPRTase/APRTase"/>
</dbReference>
<dbReference type="InterPro" id="IPR005765">
    <property type="entry name" value="Ura_phspho_trans"/>
</dbReference>
<dbReference type="NCBIfam" id="NF001097">
    <property type="entry name" value="PRK00129.1"/>
    <property type="match status" value="1"/>
</dbReference>
<dbReference type="NCBIfam" id="TIGR01091">
    <property type="entry name" value="upp"/>
    <property type="match status" value="1"/>
</dbReference>
<dbReference type="PANTHER" id="PTHR32315">
    <property type="entry name" value="ADENINE PHOSPHORIBOSYLTRANSFERASE"/>
    <property type="match status" value="1"/>
</dbReference>
<dbReference type="PANTHER" id="PTHR32315:SF4">
    <property type="entry name" value="URACIL PHOSPHORIBOSYLTRANSFERASE, CHLOROPLASTIC"/>
    <property type="match status" value="1"/>
</dbReference>
<dbReference type="Pfam" id="PF14681">
    <property type="entry name" value="UPRTase"/>
    <property type="match status" value="1"/>
</dbReference>
<dbReference type="SUPFAM" id="SSF53271">
    <property type="entry name" value="PRTase-like"/>
    <property type="match status" value="1"/>
</dbReference>